<gene>
    <name evidence="4" type="primary">ENO3</name>
</gene>
<dbReference type="EC" id="4.2.1.11" evidence="2"/>
<dbReference type="Allergome" id="10132">
    <property type="allergen name" value="Thu a 2"/>
</dbReference>
<dbReference type="Allergome" id="10153">
    <property type="allergen name" value="Thu a 2.0101"/>
</dbReference>
<dbReference type="UniPathway" id="UPA00109">
    <property type="reaction ID" value="UER00187"/>
</dbReference>
<dbReference type="GO" id="GO:0005737">
    <property type="term" value="C:cytoplasm"/>
    <property type="evidence" value="ECO:0007669"/>
    <property type="project" value="UniProtKB-SubCell"/>
</dbReference>
<dbReference type="GO" id="GO:0046872">
    <property type="term" value="F:metal ion binding"/>
    <property type="evidence" value="ECO:0007669"/>
    <property type="project" value="UniProtKB-KW"/>
</dbReference>
<dbReference type="GO" id="GO:0004634">
    <property type="term" value="F:phosphopyruvate hydratase activity"/>
    <property type="evidence" value="ECO:0007669"/>
    <property type="project" value="UniProtKB-EC"/>
</dbReference>
<dbReference type="GO" id="GO:0006096">
    <property type="term" value="P:glycolytic process"/>
    <property type="evidence" value="ECO:0007669"/>
    <property type="project" value="UniProtKB-UniPathway"/>
</dbReference>
<accession>P86978</accession>
<organism>
    <name type="scientific">Thunnus albacares</name>
    <name type="common">Yellowfin tuna</name>
    <name type="synonym">Neothunnus macropterus</name>
    <dbReference type="NCBI Taxonomy" id="8236"/>
    <lineage>
        <taxon>Eukaryota</taxon>
        <taxon>Metazoa</taxon>
        <taxon>Chordata</taxon>
        <taxon>Craniata</taxon>
        <taxon>Vertebrata</taxon>
        <taxon>Euteleostomi</taxon>
        <taxon>Actinopterygii</taxon>
        <taxon>Neopterygii</taxon>
        <taxon>Teleostei</taxon>
        <taxon>Neoteleostei</taxon>
        <taxon>Acanthomorphata</taxon>
        <taxon>Pelagiaria</taxon>
        <taxon>Scombriformes</taxon>
        <taxon>Scombridae</taxon>
        <taxon>Thunnus</taxon>
    </lineage>
</organism>
<reference evidence="8" key="1">
    <citation type="journal article" date="2013" name="Clin. Exp. Allergy">
        <title>Identification of enolases and aldolases as important fish allergens in cod, salmon and tuna: component resolved diagnosis using parvalbumin and the new allergens.</title>
        <authorList>
            <person name="Kuehn A."/>
            <person name="Hilger C."/>
            <person name="Lehners-Weber C."/>
            <person name="Codreanu-Morel F."/>
            <person name="Morisset M."/>
            <person name="Metz-Favre C."/>
            <person name="Pauli G."/>
            <person name="de Blay F."/>
            <person name="Revets D."/>
            <person name="Muller C.P."/>
            <person name="Vogel L."/>
            <person name="Vieths S."/>
            <person name="Hentges F."/>
        </authorList>
    </citation>
    <scope>PROTEIN SEQUENCE</scope>
    <scope>ALLERGEN</scope>
    <scope>IDENTIFICATION BY MASS SPECTROMETRY</scope>
    <source>
        <tissue evidence="6">Muscle</tissue>
    </source>
</reference>
<protein>
    <recommendedName>
        <fullName evidence="7">Beta-enolase</fullName>
        <ecNumber evidence="2">4.2.1.11</ecNumber>
    </recommendedName>
    <alternativeName>
        <fullName evidence="4">2-phospho-D-glycerate hydro-lyase</fullName>
    </alternativeName>
    <alternativeName>
        <fullName evidence="4">Enolase 3</fullName>
    </alternativeName>
    <alternativeName>
        <fullName evidence="4">Muscle-specific enolase</fullName>
        <shortName evidence="4">MSE</shortName>
    </alternativeName>
    <alternativeName>
        <fullName evidence="4">Skeletal muscle enolase</fullName>
    </alternativeName>
</protein>
<sequence length="12" mass="1387">SITKIKAREILD</sequence>
<feature type="chain" id="PRO_0000425077" description="Beta-enolase">
    <location>
        <begin position="1"/>
        <end position="12" status="greater than"/>
    </location>
</feature>
<feature type="non-terminal residue" evidence="7">
    <location>
        <position position="12"/>
    </location>
</feature>
<evidence type="ECO:0000250" key="1">
    <source>
        <dbReference type="UniProtKB" id="B3A0L6"/>
    </source>
</evidence>
<evidence type="ECO:0000250" key="2">
    <source>
        <dbReference type="UniProtKB" id="P00924"/>
    </source>
</evidence>
<evidence type="ECO:0000250" key="3">
    <source>
        <dbReference type="UniProtKB" id="P15429"/>
    </source>
</evidence>
<evidence type="ECO:0000250" key="4">
    <source>
        <dbReference type="UniProtKB" id="P21550"/>
    </source>
</evidence>
<evidence type="ECO:0000255" key="5"/>
<evidence type="ECO:0000269" key="6">
    <source>
    </source>
</evidence>
<evidence type="ECO:0000303" key="7">
    <source>
    </source>
</evidence>
<evidence type="ECO:0000305" key="8"/>
<proteinExistence type="evidence at protein level"/>
<keyword id="KW-0020">Allergen</keyword>
<keyword id="KW-0963">Cytoplasm</keyword>
<keyword id="KW-0903">Direct protein sequencing</keyword>
<keyword id="KW-0324">Glycolysis</keyword>
<keyword id="KW-0456">Lyase</keyword>
<keyword id="KW-0460">Magnesium</keyword>
<keyword id="KW-0479">Metal-binding</keyword>
<name>ENOB_THUAL</name>
<comment type="function">
    <text evidence="3">Glycolytic enzyme that catalyzes the conversion of 2-phosphoglycerate to phosphoenolpyruvate.</text>
</comment>
<comment type="catalytic activity">
    <reaction evidence="3">
        <text>(2R)-2-phosphoglycerate = phosphoenolpyruvate + H2O</text>
        <dbReference type="Rhea" id="RHEA:10164"/>
        <dbReference type="ChEBI" id="CHEBI:15377"/>
        <dbReference type="ChEBI" id="CHEBI:58289"/>
        <dbReference type="ChEBI" id="CHEBI:58702"/>
        <dbReference type="EC" id="4.2.1.11"/>
    </reaction>
    <physiologicalReaction direction="left-to-right" evidence="3">
        <dbReference type="Rhea" id="RHEA:10165"/>
    </physiologicalReaction>
</comment>
<comment type="cofactor">
    <cofactor evidence="2">
        <name>Mg(2+)</name>
        <dbReference type="ChEBI" id="CHEBI:18420"/>
    </cofactor>
    <text evidence="2">Mg(2+) is required for catalysis and for stabilizing the dimer.</text>
</comment>
<comment type="pathway">
    <text evidence="3">Carbohydrate degradation; glycolysis; pyruvate from D-glyceraldehyde 3-phosphate: step 4/5.</text>
</comment>
<comment type="subunit">
    <text evidence="1">Dimer.</text>
</comment>
<comment type="subcellular location">
    <subcellularLocation>
        <location evidence="2">Cytoplasm</location>
    </subcellularLocation>
</comment>
<comment type="allergen">
    <text evidence="6">Causes an allergic reaction in human. Binds to IgE.</text>
</comment>
<comment type="similarity">
    <text evidence="5">Belongs to the enolase family.</text>
</comment>